<name>TRPF_GLOC7</name>
<proteinExistence type="inferred from homology"/>
<dbReference type="EC" id="5.3.1.24" evidence="1"/>
<dbReference type="EMBL" id="CP001291">
    <property type="protein sequence ID" value="ACK68831.1"/>
    <property type="molecule type" value="Genomic_DNA"/>
</dbReference>
<dbReference type="RefSeq" id="WP_012597781.1">
    <property type="nucleotide sequence ID" value="NC_011729.1"/>
</dbReference>
<dbReference type="SMR" id="B7KC08"/>
<dbReference type="STRING" id="65393.PCC7424_0363"/>
<dbReference type="KEGG" id="cyc:PCC7424_0363"/>
<dbReference type="eggNOG" id="COG0135">
    <property type="taxonomic scope" value="Bacteria"/>
</dbReference>
<dbReference type="HOGENOM" id="CLU_076364_2_0_3"/>
<dbReference type="OrthoDB" id="9786954at2"/>
<dbReference type="UniPathway" id="UPA00035">
    <property type="reaction ID" value="UER00042"/>
</dbReference>
<dbReference type="Proteomes" id="UP000002384">
    <property type="component" value="Chromosome"/>
</dbReference>
<dbReference type="GO" id="GO:0004640">
    <property type="term" value="F:phosphoribosylanthranilate isomerase activity"/>
    <property type="evidence" value="ECO:0007669"/>
    <property type="project" value="UniProtKB-UniRule"/>
</dbReference>
<dbReference type="GO" id="GO:0000162">
    <property type="term" value="P:L-tryptophan biosynthetic process"/>
    <property type="evidence" value="ECO:0007669"/>
    <property type="project" value="UniProtKB-UniRule"/>
</dbReference>
<dbReference type="CDD" id="cd00405">
    <property type="entry name" value="PRAI"/>
    <property type="match status" value="1"/>
</dbReference>
<dbReference type="FunFam" id="3.20.20.70:FF:000075">
    <property type="entry name" value="Tryptophan biosynthesis protein TRP1"/>
    <property type="match status" value="1"/>
</dbReference>
<dbReference type="Gene3D" id="3.20.20.70">
    <property type="entry name" value="Aldolase class I"/>
    <property type="match status" value="1"/>
</dbReference>
<dbReference type="HAMAP" id="MF_00135">
    <property type="entry name" value="PRAI"/>
    <property type="match status" value="1"/>
</dbReference>
<dbReference type="InterPro" id="IPR013785">
    <property type="entry name" value="Aldolase_TIM"/>
</dbReference>
<dbReference type="InterPro" id="IPR001240">
    <property type="entry name" value="PRAI_dom"/>
</dbReference>
<dbReference type="InterPro" id="IPR011060">
    <property type="entry name" value="RibuloseP-bd_barrel"/>
</dbReference>
<dbReference type="InterPro" id="IPR044643">
    <property type="entry name" value="TrpF_fam"/>
</dbReference>
<dbReference type="NCBIfam" id="NF002298">
    <property type="entry name" value="PRK01222.1-4"/>
    <property type="match status" value="1"/>
</dbReference>
<dbReference type="PANTHER" id="PTHR42894">
    <property type="entry name" value="N-(5'-PHOSPHORIBOSYL)ANTHRANILATE ISOMERASE"/>
    <property type="match status" value="1"/>
</dbReference>
<dbReference type="PANTHER" id="PTHR42894:SF1">
    <property type="entry name" value="N-(5'-PHOSPHORIBOSYL)ANTHRANILATE ISOMERASE"/>
    <property type="match status" value="1"/>
</dbReference>
<dbReference type="Pfam" id="PF00697">
    <property type="entry name" value="PRAI"/>
    <property type="match status" value="1"/>
</dbReference>
<dbReference type="SUPFAM" id="SSF51366">
    <property type="entry name" value="Ribulose-phoshate binding barrel"/>
    <property type="match status" value="1"/>
</dbReference>
<feature type="chain" id="PRO_1000197096" description="N-(5'-phosphoribosyl)anthranilate isomerase">
    <location>
        <begin position="1"/>
        <end position="220"/>
    </location>
</feature>
<gene>
    <name evidence="1" type="primary">trpF</name>
    <name type="ordered locus">PCC7424_0363</name>
</gene>
<organism>
    <name type="scientific">Gloeothece citriformis (strain PCC 7424)</name>
    <name type="common">Cyanothece sp. (strain PCC 7424)</name>
    <dbReference type="NCBI Taxonomy" id="65393"/>
    <lineage>
        <taxon>Bacteria</taxon>
        <taxon>Bacillati</taxon>
        <taxon>Cyanobacteriota</taxon>
        <taxon>Cyanophyceae</taxon>
        <taxon>Oscillatoriophycideae</taxon>
        <taxon>Chroococcales</taxon>
        <taxon>Aphanothecaceae</taxon>
        <taxon>Gloeothece</taxon>
        <taxon>Gloeothece citriformis</taxon>
    </lineage>
</organism>
<sequence>MRVKICGITQPEQGRAIANLGANTLGFICVAQSPRYVTPNQIREIIEQLPPLVDKIGVFVNAPATEIINIVAQTGLTGVQLHGDETPEMCQQLKISLPDVEIIRALRIKSSQSLREVALYFDSVNTLLLDAYHPHLFGGTGATIDWEILAQFKSPIPWLLAGGLKPDNLVSALSQLSPHGIDLSSGVERAPGDKDLDKVAELFQQLHRWKSNFKEKLMEN</sequence>
<evidence type="ECO:0000255" key="1">
    <source>
        <dbReference type="HAMAP-Rule" id="MF_00135"/>
    </source>
</evidence>
<comment type="catalytic activity">
    <reaction evidence="1">
        <text>N-(5-phospho-beta-D-ribosyl)anthranilate = 1-(2-carboxyphenylamino)-1-deoxy-D-ribulose 5-phosphate</text>
        <dbReference type="Rhea" id="RHEA:21540"/>
        <dbReference type="ChEBI" id="CHEBI:18277"/>
        <dbReference type="ChEBI" id="CHEBI:58613"/>
        <dbReference type="EC" id="5.3.1.24"/>
    </reaction>
</comment>
<comment type="pathway">
    <text evidence="1">Amino-acid biosynthesis; L-tryptophan biosynthesis; L-tryptophan from chorismate: step 3/5.</text>
</comment>
<comment type="similarity">
    <text evidence="1">Belongs to the TrpF family.</text>
</comment>
<protein>
    <recommendedName>
        <fullName evidence="1">N-(5'-phosphoribosyl)anthranilate isomerase</fullName>
        <shortName evidence="1">PRAI</shortName>
        <ecNumber evidence="1">5.3.1.24</ecNumber>
    </recommendedName>
</protein>
<reference key="1">
    <citation type="journal article" date="2011" name="MBio">
        <title>Novel metabolic attributes of the genus Cyanothece, comprising a group of unicellular nitrogen-fixing Cyanobacteria.</title>
        <authorList>
            <person name="Bandyopadhyay A."/>
            <person name="Elvitigala T."/>
            <person name="Welsh E."/>
            <person name="Stockel J."/>
            <person name="Liberton M."/>
            <person name="Min H."/>
            <person name="Sherman L.A."/>
            <person name="Pakrasi H.B."/>
        </authorList>
    </citation>
    <scope>NUCLEOTIDE SEQUENCE [LARGE SCALE GENOMIC DNA]</scope>
    <source>
        <strain>PCC 7424</strain>
    </source>
</reference>
<accession>B7KC08</accession>
<keyword id="KW-0028">Amino-acid biosynthesis</keyword>
<keyword id="KW-0057">Aromatic amino acid biosynthesis</keyword>
<keyword id="KW-0413">Isomerase</keyword>
<keyword id="KW-1185">Reference proteome</keyword>
<keyword id="KW-0822">Tryptophan biosynthesis</keyword>